<dbReference type="EC" id="2.4.2.29" evidence="1"/>
<dbReference type="EMBL" id="CP000555">
    <property type="protein sequence ID" value="ABM96686.1"/>
    <property type="molecule type" value="Genomic_DNA"/>
</dbReference>
<dbReference type="RefSeq" id="WP_011831306.1">
    <property type="nucleotide sequence ID" value="NC_008825.1"/>
</dbReference>
<dbReference type="SMR" id="A2SM97"/>
<dbReference type="STRING" id="420662.Mpe_A3733"/>
<dbReference type="KEGG" id="mpt:Mpe_A3733"/>
<dbReference type="eggNOG" id="COG0343">
    <property type="taxonomic scope" value="Bacteria"/>
</dbReference>
<dbReference type="HOGENOM" id="CLU_022060_0_1_4"/>
<dbReference type="UniPathway" id="UPA00392"/>
<dbReference type="Proteomes" id="UP000000366">
    <property type="component" value="Chromosome"/>
</dbReference>
<dbReference type="GO" id="GO:0005829">
    <property type="term" value="C:cytosol"/>
    <property type="evidence" value="ECO:0007669"/>
    <property type="project" value="TreeGrafter"/>
</dbReference>
<dbReference type="GO" id="GO:0046872">
    <property type="term" value="F:metal ion binding"/>
    <property type="evidence" value="ECO:0007669"/>
    <property type="project" value="UniProtKB-KW"/>
</dbReference>
<dbReference type="GO" id="GO:0008479">
    <property type="term" value="F:tRNA-guanosine(34) queuine transglycosylase activity"/>
    <property type="evidence" value="ECO:0007669"/>
    <property type="project" value="UniProtKB-UniRule"/>
</dbReference>
<dbReference type="GO" id="GO:0008616">
    <property type="term" value="P:queuosine biosynthetic process"/>
    <property type="evidence" value="ECO:0007669"/>
    <property type="project" value="UniProtKB-UniRule"/>
</dbReference>
<dbReference type="GO" id="GO:0002099">
    <property type="term" value="P:tRNA wobble guanine modification"/>
    <property type="evidence" value="ECO:0007669"/>
    <property type="project" value="TreeGrafter"/>
</dbReference>
<dbReference type="GO" id="GO:0101030">
    <property type="term" value="P:tRNA-guanine transglycosylation"/>
    <property type="evidence" value="ECO:0007669"/>
    <property type="project" value="InterPro"/>
</dbReference>
<dbReference type="FunFam" id="3.20.20.105:FF:000001">
    <property type="entry name" value="Queuine tRNA-ribosyltransferase"/>
    <property type="match status" value="1"/>
</dbReference>
<dbReference type="Gene3D" id="3.20.20.105">
    <property type="entry name" value="Queuine tRNA-ribosyltransferase-like"/>
    <property type="match status" value="1"/>
</dbReference>
<dbReference type="HAMAP" id="MF_00168">
    <property type="entry name" value="Q_tRNA_Tgt"/>
    <property type="match status" value="1"/>
</dbReference>
<dbReference type="InterPro" id="IPR050076">
    <property type="entry name" value="ArchSynthase1/Queuine_TRR"/>
</dbReference>
<dbReference type="InterPro" id="IPR004803">
    <property type="entry name" value="TGT"/>
</dbReference>
<dbReference type="InterPro" id="IPR036511">
    <property type="entry name" value="TGT-like_sf"/>
</dbReference>
<dbReference type="InterPro" id="IPR002616">
    <property type="entry name" value="tRNA_ribo_trans-like"/>
</dbReference>
<dbReference type="NCBIfam" id="TIGR00430">
    <property type="entry name" value="Q_tRNA_tgt"/>
    <property type="match status" value="1"/>
</dbReference>
<dbReference type="NCBIfam" id="TIGR00449">
    <property type="entry name" value="tgt_general"/>
    <property type="match status" value="1"/>
</dbReference>
<dbReference type="PANTHER" id="PTHR46499">
    <property type="entry name" value="QUEUINE TRNA-RIBOSYLTRANSFERASE"/>
    <property type="match status" value="1"/>
</dbReference>
<dbReference type="PANTHER" id="PTHR46499:SF1">
    <property type="entry name" value="QUEUINE TRNA-RIBOSYLTRANSFERASE"/>
    <property type="match status" value="1"/>
</dbReference>
<dbReference type="Pfam" id="PF01702">
    <property type="entry name" value="TGT"/>
    <property type="match status" value="1"/>
</dbReference>
<dbReference type="SUPFAM" id="SSF51713">
    <property type="entry name" value="tRNA-guanine transglycosylase"/>
    <property type="match status" value="1"/>
</dbReference>
<protein>
    <recommendedName>
        <fullName evidence="1">Queuine tRNA-ribosyltransferase</fullName>
        <ecNumber evidence="1">2.4.2.29</ecNumber>
    </recommendedName>
    <alternativeName>
        <fullName evidence="1">Guanine insertion enzyme</fullName>
    </alternativeName>
    <alternativeName>
        <fullName evidence="1">tRNA-guanine transglycosylase</fullName>
    </alternativeName>
</protein>
<name>TGT_METPP</name>
<sequence>MLRFDLLHTEGHARRGRLTLNHGVVETPIFMPVGTYGTVKGVMPASLEAMGAQIILGNTFHLWLRPGLDVLRQFGGLHRFENWQRPILTDSGGFQVWSLGAMRKISEEGVKFASPVNGDKLFLTPETSMQIQTVLNSDIVMQFDECTPYETSGHLTTEQEARASMELSLRWAARCKTEFARLENPNALFGIVQGGMFEPLRQASLDALVAMDFPGYAIGGVSVGEPKDEMLRIMAHTPHRLPAHKPRYLMGVGTPEDLVEGVTQGVDLFDCVMPTRNARNGHLFTRHGDLRLRNARYKTDERPIDESCTCTACNGFSRAYLHHLDRCGEMLGPMLTSIHNLHYFLNLMREVREALDAGRFEAFRAQFRADRARGV</sequence>
<gene>
    <name evidence="1" type="primary">tgt</name>
    <name type="ordered locus">Mpe_A3733</name>
</gene>
<proteinExistence type="inferred from homology"/>
<reference key="1">
    <citation type="journal article" date="2007" name="J. Bacteriol.">
        <title>Whole-genome analysis of the methyl tert-butyl ether-degrading beta-proteobacterium Methylibium petroleiphilum PM1.</title>
        <authorList>
            <person name="Kane S.R."/>
            <person name="Chakicherla A.Y."/>
            <person name="Chain P.S.G."/>
            <person name="Schmidt R."/>
            <person name="Shin M.W."/>
            <person name="Legler T.C."/>
            <person name="Scow K.M."/>
            <person name="Larimer F.W."/>
            <person name="Lucas S.M."/>
            <person name="Richardson P.M."/>
            <person name="Hristova K.R."/>
        </authorList>
    </citation>
    <scope>NUCLEOTIDE SEQUENCE [LARGE SCALE GENOMIC DNA]</scope>
    <source>
        <strain>ATCC BAA-1232 / LMG 22953 / PM1</strain>
    </source>
</reference>
<keyword id="KW-0328">Glycosyltransferase</keyword>
<keyword id="KW-0479">Metal-binding</keyword>
<keyword id="KW-0671">Queuosine biosynthesis</keyword>
<keyword id="KW-1185">Reference proteome</keyword>
<keyword id="KW-0808">Transferase</keyword>
<keyword id="KW-0819">tRNA processing</keyword>
<keyword id="KW-0862">Zinc</keyword>
<accession>A2SM97</accession>
<feature type="chain" id="PRO_1000058283" description="Queuine tRNA-ribosyltransferase">
    <location>
        <begin position="1"/>
        <end position="375"/>
    </location>
</feature>
<feature type="region of interest" description="RNA binding" evidence="1">
    <location>
        <begin position="251"/>
        <end position="257"/>
    </location>
</feature>
<feature type="region of interest" description="RNA binding; important for wobble base 34 recognition" evidence="1">
    <location>
        <begin position="275"/>
        <end position="279"/>
    </location>
</feature>
<feature type="active site" description="Proton acceptor" evidence="1">
    <location>
        <position position="90"/>
    </location>
</feature>
<feature type="active site" description="Nucleophile" evidence="1">
    <location>
        <position position="270"/>
    </location>
</feature>
<feature type="binding site" evidence="1">
    <location>
        <begin position="90"/>
        <end position="94"/>
    </location>
    <ligand>
        <name>substrate</name>
    </ligand>
</feature>
<feature type="binding site" evidence="1">
    <location>
        <position position="144"/>
    </location>
    <ligand>
        <name>substrate</name>
    </ligand>
</feature>
<feature type="binding site" evidence="1">
    <location>
        <position position="193"/>
    </location>
    <ligand>
        <name>substrate</name>
    </ligand>
</feature>
<feature type="binding site" evidence="1">
    <location>
        <position position="220"/>
    </location>
    <ligand>
        <name>substrate</name>
    </ligand>
</feature>
<feature type="binding site" evidence="1">
    <location>
        <position position="308"/>
    </location>
    <ligand>
        <name>Zn(2+)</name>
        <dbReference type="ChEBI" id="CHEBI:29105"/>
    </ligand>
</feature>
<feature type="binding site" evidence="1">
    <location>
        <position position="310"/>
    </location>
    <ligand>
        <name>Zn(2+)</name>
        <dbReference type="ChEBI" id="CHEBI:29105"/>
    </ligand>
</feature>
<feature type="binding site" evidence="1">
    <location>
        <position position="313"/>
    </location>
    <ligand>
        <name>Zn(2+)</name>
        <dbReference type="ChEBI" id="CHEBI:29105"/>
    </ligand>
</feature>
<feature type="binding site" evidence="1">
    <location>
        <position position="339"/>
    </location>
    <ligand>
        <name>Zn(2+)</name>
        <dbReference type="ChEBI" id="CHEBI:29105"/>
    </ligand>
</feature>
<comment type="function">
    <text evidence="1">Catalyzes the base-exchange of a guanine (G) residue with the queuine precursor 7-aminomethyl-7-deazaguanine (PreQ1) at position 34 (anticodon wobble position) in tRNAs with GU(N) anticodons (tRNA-Asp, -Asn, -His and -Tyr). Catalysis occurs through a double-displacement mechanism. The nucleophile active site attacks the C1' of nucleotide 34 to detach the guanine base from the RNA, forming a covalent enzyme-RNA intermediate. The proton acceptor active site deprotonates the incoming PreQ1, allowing a nucleophilic attack on the C1' of the ribose to form the product. After dissociation, two additional enzymatic reactions on the tRNA convert PreQ1 to queuine (Q), resulting in the hypermodified nucleoside queuosine (7-(((4,5-cis-dihydroxy-2-cyclopenten-1-yl)amino)methyl)-7-deazaguanosine).</text>
</comment>
<comment type="catalytic activity">
    <reaction evidence="1">
        <text>7-aminomethyl-7-carbaguanine + guanosine(34) in tRNA = 7-aminomethyl-7-carbaguanosine(34) in tRNA + guanine</text>
        <dbReference type="Rhea" id="RHEA:24104"/>
        <dbReference type="Rhea" id="RHEA-COMP:10341"/>
        <dbReference type="Rhea" id="RHEA-COMP:10342"/>
        <dbReference type="ChEBI" id="CHEBI:16235"/>
        <dbReference type="ChEBI" id="CHEBI:58703"/>
        <dbReference type="ChEBI" id="CHEBI:74269"/>
        <dbReference type="ChEBI" id="CHEBI:82833"/>
        <dbReference type="EC" id="2.4.2.29"/>
    </reaction>
</comment>
<comment type="cofactor">
    <cofactor evidence="1">
        <name>Zn(2+)</name>
        <dbReference type="ChEBI" id="CHEBI:29105"/>
    </cofactor>
    <text evidence="1">Binds 1 zinc ion per subunit.</text>
</comment>
<comment type="pathway">
    <text evidence="1">tRNA modification; tRNA-queuosine biosynthesis.</text>
</comment>
<comment type="subunit">
    <text evidence="1">Homodimer. Within each dimer, one monomer is responsible for RNA recognition and catalysis, while the other monomer binds to the replacement base PreQ1.</text>
</comment>
<comment type="similarity">
    <text evidence="1">Belongs to the queuine tRNA-ribosyltransferase family.</text>
</comment>
<organism>
    <name type="scientific">Methylibium petroleiphilum (strain ATCC BAA-1232 / LMG 22953 / PM1)</name>
    <dbReference type="NCBI Taxonomy" id="420662"/>
    <lineage>
        <taxon>Bacteria</taxon>
        <taxon>Pseudomonadati</taxon>
        <taxon>Pseudomonadota</taxon>
        <taxon>Betaproteobacteria</taxon>
        <taxon>Burkholderiales</taxon>
        <taxon>Sphaerotilaceae</taxon>
        <taxon>Methylibium</taxon>
    </lineage>
</organism>
<evidence type="ECO:0000255" key="1">
    <source>
        <dbReference type="HAMAP-Rule" id="MF_00168"/>
    </source>
</evidence>